<dbReference type="EC" id="6.1.1.6" evidence="1"/>
<dbReference type="EMBL" id="CP000435">
    <property type="protein sequence ID" value="ABI47326.1"/>
    <property type="molecule type" value="Genomic_DNA"/>
</dbReference>
<dbReference type="RefSeq" id="WP_011618103.1">
    <property type="nucleotide sequence ID" value="NC_008319.1"/>
</dbReference>
<dbReference type="SMR" id="Q0IDW9"/>
<dbReference type="STRING" id="64471.sync_0116"/>
<dbReference type="KEGG" id="syg:sync_0116"/>
<dbReference type="eggNOG" id="COG1190">
    <property type="taxonomic scope" value="Bacteria"/>
</dbReference>
<dbReference type="HOGENOM" id="CLU_008255_6_0_3"/>
<dbReference type="OrthoDB" id="9802326at2"/>
<dbReference type="Proteomes" id="UP000001961">
    <property type="component" value="Chromosome"/>
</dbReference>
<dbReference type="GO" id="GO:0005829">
    <property type="term" value="C:cytosol"/>
    <property type="evidence" value="ECO:0007669"/>
    <property type="project" value="TreeGrafter"/>
</dbReference>
<dbReference type="GO" id="GO:0005524">
    <property type="term" value="F:ATP binding"/>
    <property type="evidence" value="ECO:0007669"/>
    <property type="project" value="UniProtKB-UniRule"/>
</dbReference>
<dbReference type="GO" id="GO:0004824">
    <property type="term" value="F:lysine-tRNA ligase activity"/>
    <property type="evidence" value="ECO:0007669"/>
    <property type="project" value="UniProtKB-UniRule"/>
</dbReference>
<dbReference type="GO" id="GO:0000287">
    <property type="term" value="F:magnesium ion binding"/>
    <property type="evidence" value="ECO:0007669"/>
    <property type="project" value="UniProtKB-UniRule"/>
</dbReference>
<dbReference type="GO" id="GO:0000049">
    <property type="term" value="F:tRNA binding"/>
    <property type="evidence" value="ECO:0007669"/>
    <property type="project" value="TreeGrafter"/>
</dbReference>
<dbReference type="GO" id="GO:0006430">
    <property type="term" value="P:lysyl-tRNA aminoacylation"/>
    <property type="evidence" value="ECO:0007669"/>
    <property type="project" value="UniProtKB-UniRule"/>
</dbReference>
<dbReference type="CDD" id="cd00775">
    <property type="entry name" value="LysRS_core"/>
    <property type="match status" value="1"/>
</dbReference>
<dbReference type="CDD" id="cd04322">
    <property type="entry name" value="LysRS_N"/>
    <property type="match status" value="1"/>
</dbReference>
<dbReference type="FunFam" id="2.40.50.140:FF:000024">
    <property type="entry name" value="Lysine--tRNA ligase"/>
    <property type="match status" value="1"/>
</dbReference>
<dbReference type="FunFam" id="3.30.930.10:FF:000238">
    <property type="entry name" value="Lysine--tRNA ligase"/>
    <property type="match status" value="1"/>
</dbReference>
<dbReference type="Gene3D" id="3.30.930.10">
    <property type="entry name" value="Bira Bifunctional Protein, Domain 2"/>
    <property type="match status" value="1"/>
</dbReference>
<dbReference type="Gene3D" id="2.40.50.140">
    <property type="entry name" value="Nucleic acid-binding proteins"/>
    <property type="match status" value="1"/>
</dbReference>
<dbReference type="HAMAP" id="MF_00252">
    <property type="entry name" value="Lys_tRNA_synth_class2"/>
    <property type="match status" value="1"/>
</dbReference>
<dbReference type="InterPro" id="IPR004364">
    <property type="entry name" value="Aa-tRNA-synt_II"/>
</dbReference>
<dbReference type="InterPro" id="IPR006195">
    <property type="entry name" value="aa-tRNA-synth_II"/>
</dbReference>
<dbReference type="InterPro" id="IPR045864">
    <property type="entry name" value="aa-tRNA-synth_II/BPL/LPL"/>
</dbReference>
<dbReference type="InterPro" id="IPR002313">
    <property type="entry name" value="Lys-tRNA-ligase_II"/>
</dbReference>
<dbReference type="InterPro" id="IPR034762">
    <property type="entry name" value="Lys-tRNA-ligase_II_bac/euk"/>
</dbReference>
<dbReference type="InterPro" id="IPR044136">
    <property type="entry name" value="Lys-tRNA-ligase_II_N"/>
</dbReference>
<dbReference type="InterPro" id="IPR018149">
    <property type="entry name" value="Lys-tRNA-synth_II_C"/>
</dbReference>
<dbReference type="InterPro" id="IPR012340">
    <property type="entry name" value="NA-bd_OB-fold"/>
</dbReference>
<dbReference type="InterPro" id="IPR004365">
    <property type="entry name" value="NA-bd_OB_tRNA"/>
</dbReference>
<dbReference type="NCBIfam" id="TIGR00499">
    <property type="entry name" value="lysS_bact"/>
    <property type="match status" value="1"/>
</dbReference>
<dbReference type="NCBIfam" id="NF001756">
    <property type="entry name" value="PRK00484.1"/>
    <property type="match status" value="1"/>
</dbReference>
<dbReference type="PANTHER" id="PTHR42918:SF15">
    <property type="entry name" value="LYSINE--TRNA LIGASE, CHLOROPLASTIC_MITOCHONDRIAL"/>
    <property type="match status" value="1"/>
</dbReference>
<dbReference type="PANTHER" id="PTHR42918">
    <property type="entry name" value="LYSYL-TRNA SYNTHETASE"/>
    <property type="match status" value="1"/>
</dbReference>
<dbReference type="Pfam" id="PF00152">
    <property type="entry name" value="tRNA-synt_2"/>
    <property type="match status" value="1"/>
</dbReference>
<dbReference type="Pfam" id="PF01336">
    <property type="entry name" value="tRNA_anti-codon"/>
    <property type="match status" value="1"/>
</dbReference>
<dbReference type="PIRSF" id="PIRSF039101">
    <property type="entry name" value="LysRS2"/>
    <property type="match status" value="1"/>
</dbReference>
<dbReference type="PRINTS" id="PR00982">
    <property type="entry name" value="TRNASYNTHLYS"/>
</dbReference>
<dbReference type="SUPFAM" id="SSF55681">
    <property type="entry name" value="Class II aaRS and biotin synthetases"/>
    <property type="match status" value="1"/>
</dbReference>
<dbReference type="SUPFAM" id="SSF50249">
    <property type="entry name" value="Nucleic acid-binding proteins"/>
    <property type="match status" value="1"/>
</dbReference>
<dbReference type="PROSITE" id="PS50862">
    <property type="entry name" value="AA_TRNA_LIGASE_II"/>
    <property type="match status" value="1"/>
</dbReference>
<feature type="chain" id="PRO_1000012954" description="Lysine--tRNA ligase">
    <location>
        <begin position="1"/>
        <end position="489"/>
    </location>
</feature>
<feature type="binding site" evidence="1">
    <location>
        <position position="399"/>
    </location>
    <ligand>
        <name>Mg(2+)</name>
        <dbReference type="ChEBI" id="CHEBI:18420"/>
        <label>1</label>
    </ligand>
</feature>
<feature type="binding site" evidence="1">
    <location>
        <position position="406"/>
    </location>
    <ligand>
        <name>Mg(2+)</name>
        <dbReference type="ChEBI" id="CHEBI:18420"/>
        <label>1</label>
    </ligand>
</feature>
<feature type="binding site" evidence="1">
    <location>
        <position position="406"/>
    </location>
    <ligand>
        <name>Mg(2+)</name>
        <dbReference type="ChEBI" id="CHEBI:18420"/>
        <label>2</label>
    </ligand>
</feature>
<accession>Q0IDW9</accession>
<organism>
    <name type="scientific">Synechococcus sp. (strain CC9311)</name>
    <dbReference type="NCBI Taxonomy" id="64471"/>
    <lineage>
        <taxon>Bacteria</taxon>
        <taxon>Bacillati</taxon>
        <taxon>Cyanobacteriota</taxon>
        <taxon>Cyanophyceae</taxon>
        <taxon>Synechococcales</taxon>
        <taxon>Synechococcaceae</taxon>
        <taxon>Synechococcus</taxon>
    </lineage>
</organism>
<name>SYK_SYNS3</name>
<protein>
    <recommendedName>
        <fullName evidence="1">Lysine--tRNA ligase</fullName>
        <ecNumber evidence="1">6.1.1.6</ecNumber>
    </recommendedName>
    <alternativeName>
        <fullName evidence="1">Lysyl-tRNA synthetase</fullName>
        <shortName evidence="1">LysRS</shortName>
    </alternativeName>
</protein>
<keyword id="KW-0030">Aminoacyl-tRNA synthetase</keyword>
<keyword id="KW-0067">ATP-binding</keyword>
<keyword id="KW-0963">Cytoplasm</keyword>
<keyword id="KW-0436">Ligase</keyword>
<keyword id="KW-0460">Magnesium</keyword>
<keyword id="KW-0479">Metal-binding</keyword>
<keyword id="KW-0547">Nucleotide-binding</keyword>
<keyword id="KW-0648">Protein biosynthesis</keyword>
<keyword id="KW-1185">Reference proteome</keyword>
<reference key="1">
    <citation type="journal article" date="2006" name="Proc. Natl. Acad. Sci. U.S.A.">
        <title>Genome sequence of Synechococcus CC9311: insights into adaptation to a coastal environment.</title>
        <authorList>
            <person name="Palenik B."/>
            <person name="Ren Q."/>
            <person name="Dupont C.L."/>
            <person name="Myers G.S."/>
            <person name="Heidelberg J.F."/>
            <person name="Badger J.H."/>
            <person name="Madupu R."/>
            <person name="Nelson W.C."/>
            <person name="Brinkac L.M."/>
            <person name="Dodson R.J."/>
            <person name="Durkin A.S."/>
            <person name="Daugherty S.C."/>
            <person name="Sullivan S.A."/>
            <person name="Khouri H."/>
            <person name="Mohamoud Y."/>
            <person name="Halpin R."/>
            <person name="Paulsen I.T."/>
        </authorList>
    </citation>
    <scope>NUCLEOTIDE SEQUENCE [LARGE SCALE GENOMIC DNA]</scope>
    <source>
        <strain>CC9311</strain>
    </source>
</reference>
<evidence type="ECO:0000255" key="1">
    <source>
        <dbReference type="HAMAP-Rule" id="MF_00252"/>
    </source>
</evidence>
<gene>
    <name evidence="1" type="primary">lysS</name>
    <name type="ordered locus">sync_0116</name>
</gene>
<sequence>MSELRETRLEKANALKEQGQEPYALRFDLTDRMARLQADHADLAKGAERDLKVSVAGRVMTRRVMGKLAFFTLADETGTIQLFLEKATLGDSFAQLSSLVDAGDLIGVHGILRRTDRGELSVKVSKWEMLTKSLQPLPDKWHGLADVEKRYRQRYLDLIVTPQSRETFRRRAMAVSAIRRWLDERDFLEIETPVLQSEAGGAEARPFITHHNTLDLPLYLRIATELHLKRLVVGGFERVYELGRIFRNEGVSTRHNPEFTSVEVYQAYADYNDMMTLTEQLIASVCEQVCGTTRISYQGVEVDLTPSWRRATMHELVQEATGLDFTSFETREAAVEAMRAANLPAPDKADTVGRLLNEAFEHAVEPNLIQPTFVLDYPQEISPLARKHRSKPGLVERFELFIVGRETANAFSELTDPLDQRGRMELQQERRAAGDVEASGVDEDFIQALEVGMPPTGGLGIGIDRLVMLLTDSPSIRDVIAFPLMRPEG</sequence>
<comment type="catalytic activity">
    <reaction evidence="1">
        <text>tRNA(Lys) + L-lysine + ATP = L-lysyl-tRNA(Lys) + AMP + diphosphate</text>
        <dbReference type="Rhea" id="RHEA:20792"/>
        <dbReference type="Rhea" id="RHEA-COMP:9696"/>
        <dbReference type="Rhea" id="RHEA-COMP:9697"/>
        <dbReference type="ChEBI" id="CHEBI:30616"/>
        <dbReference type="ChEBI" id="CHEBI:32551"/>
        <dbReference type="ChEBI" id="CHEBI:33019"/>
        <dbReference type="ChEBI" id="CHEBI:78442"/>
        <dbReference type="ChEBI" id="CHEBI:78529"/>
        <dbReference type="ChEBI" id="CHEBI:456215"/>
        <dbReference type="EC" id="6.1.1.6"/>
    </reaction>
</comment>
<comment type="cofactor">
    <cofactor evidence="1">
        <name>Mg(2+)</name>
        <dbReference type="ChEBI" id="CHEBI:18420"/>
    </cofactor>
    <text evidence="1">Binds 3 Mg(2+) ions per subunit.</text>
</comment>
<comment type="subunit">
    <text evidence="1">Homodimer.</text>
</comment>
<comment type="subcellular location">
    <subcellularLocation>
        <location evidence="1">Cytoplasm</location>
    </subcellularLocation>
</comment>
<comment type="similarity">
    <text evidence="1">Belongs to the class-II aminoacyl-tRNA synthetase family.</text>
</comment>
<proteinExistence type="inferred from homology"/>